<keyword id="KW-0067">ATP-binding</keyword>
<keyword id="KW-0238">DNA-binding</keyword>
<keyword id="KW-0347">Helicase</keyword>
<keyword id="KW-0378">Hydrolase</keyword>
<keyword id="KW-0547">Nucleotide-binding</keyword>
<keyword id="KW-0539">Nucleus</keyword>
<keyword id="KW-0597">Phosphoprotein</keyword>
<keyword id="KW-1185">Reference proteome</keyword>
<keyword id="KW-0677">Repeat</keyword>
<keyword id="KW-0804">Transcription</keyword>
<keyword id="KW-0805">Transcription regulation</keyword>
<gene>
    <name evidence="10" type="primary">mot1</name>
    <name evidence="10" type="ORF">SPBC1826.01c</name>
    <name type="ORF">SPBC25B2.12.c</name>
    <name type="ORF">SPBC6B1.01c</name>
</gene>
<evidence type="ECO:0000250" key="1">
    <source>
        <dbReference type="UniProtKB" id="P32333"/>
    </source>
</evidence>
<evidence type="ECO:0000255" key="2"/>
<evidence type="ECO:0000255" key="3">
    <source>
        <dbReference type="PROSITE-ProRule" id="PRU00541"/>
    </source>
</evidence>
<evidence type="ECO:0000255" key="4">
    <source>
        <dbReference type="PROSITE-ProRule" id="PRU00542"/>
    </source>
</evidence>
<evidence type="ECO:0000256" key="5">
    <source>
        <dbReference type="SAM" id="MobiDB-lite"/>
    </source>
</evidence>
<evidence type="ECO:0000269" key="6">
    <source>
    </source>
</evidence>
<evidence type="ECO:0000269" key="7">
    <source>
    </source>
</evidence>
<evidence type="ECO:0000305" key="8"/>
<evidence type="ECO:0000312" key="9">
    <source>
        <dbReference type="EMBL" id="BAA87285.1"/>
    </source>
</evidence>
<evidence type="ECO:0000312" key="10">
    <source>
        <dbReference type="PomBase" id="SPBC1826.01c"/>
    </source>
</evidence>
<organism>
    <name type="scientific">Schizosaccharomyces pombe (strain 972 / ATCC 24843)</name>
    <name type="common">Fission yeast</name>
    <dbReference type="NCBI Taxonomy" id="284812"/>
    <lineage>
        <taxon>Eukaryota</taxon>
        <taxon>Fungi</taxon>
        <taxon>Dikarya</taxon>
        <taxon>Ascomycota</taxon>
        <taxon>Taphrinomycotina</taxon>
        <taxon>Schizosaccharomycetes</taxon>
        <taxon>Schizosaccharomycetales</taxon>
        <taxon>Schizosaccharomycetaceae</taxon>
        <taxon>Schizosaccharomyces</taxon>
    </lineage>
</organism>
<reference key="1">
    <citation type="journal article" date="2002" name="Nature">
        <title>The genome sequence of Schizosaccharomyces pombe.</title>
        <authorList>
            <person name="Wood V."/>
            <person name="Gwilliam R."/>
            <person name="Rajandream M.A."/>
            <person name="Lyne M.H."/>
            <person name="Lyne R."/>
            <person name="Stewart A."/>
            <person name="Sgouros J.G."/>
            <person name="Peat N."/>
            <person name="Hayles J."/>
            <person name="Baker S.G."/>
            <person name="Basham D."/>
            <person name="Bowman S."/>
            <person name="Brooks K."/>
            <person name="Brown D."/>
            <person name="Brown S."/>
            <person name="Chillingworth T."/>
            <person name="Churcher C.M."/>
            <person name="Collins M."/>
            <person name="Connor R."/>
            <person name="Cronin A."/>
            <person name="Davis P."/>
            <person name="Feltwell T."/>
            <person name="Fraser A."/>
            <person name="Gentles S."/>
            <person name="Goble A."/>
            <person name="Hamlin N."/>
            <person name="Harris D.E."/>
            <person name="Hidalgo J."/>
            <person name="Hodgson G."/>
            <person name="Holroyd S."/>
            <person name="Hornsby T."/>
            <person name="Howarth S."/>
            <person name="Huckle E.J."/>
            <person name="Hunt S."/>
            <person name="Jagels K."/>
            <person name="James K.D."/>
            <person name="Jones L."/>
            <person name="Jones M."/>
            <person name="Leather S."/>
            <person name="McDonald S."/>
            <person name="McLean J."/>
            <person name="Mooney P."/>
            <person name="Moule S."/>
            <person name="Mungall K.L."/>
            <person name="Murphy L.D."/>
            <person name="Niblett D."/>
            <person name="Odell C."/>
            <person name="Oliver K."/>
            <person name="O'Neil S."/>
            <person name="Pearson D."/>
            <person name="Quail M.A."/>
            <person name="Rabbinowitsch E."/>
            <person name="Rutherford K.M."/>
            <person name="Rutter S."/>
            <person name="Saunders D."/>
            <person name="Seeger K."/>
            <person name="Sharp S."/>
            <person name="Skelton J."/>
            <person name="Simmonds M.N."/>
            <person name="Squares R."/>
            <person name="Squares S."/>
            <person name="Stevens K."/>
            <person name="Taylor K."/>
            <person name="Taylor R.G."/>
            <person name="Tivey A."/>
            <person name="Walsh S.V."/>
            <person name="Warren T."/>
            <person name="Whitehead S."/>
            <person name="Woodward J.R."/>
            <person name="Volckaert G."/>
            <person name="Aert R."/>
            <person name="Robben J."/>
            <person name="Grymonprez B."/>
            <person name="Weltjens I."/>
            <person name="Vanstreels E."/>
            <person name="Rieger M."/>
            <person name="Schaefer M."/>
            <person name="Mueller-Auer S."/>
            <person name="Gabel C."/>
            <person name="Fuchs M."/>
            <person name="Duesterhoeft A."/>
            <person name="Fritzc C."/>
            <person name="Holzer E."/>
            <person name="Moestl D."/>
            <person name="Hilbert H."/>
            <person name="Borzym K."/>
            <person name="Langer I."/>
            <person name="Beck A."/>
            <person name="Lehrach H."/>
            <person name="Reinhardt R."/>
            <person name="Pohl T.M."/>
            <person name="Eger P."/>
            <person name="Zimmermann W."/>
            <person name="Wedler H."/>
            <person name="Wambutt R."/>
            <person name="Purnelle B."/>
            <person name="Goffeau A."/>
            <person name="Cadieu E."/>
            <person name="Dreano S."/>
            <person name="Gloux S."/>
            <person name="Lelaure V."/>
            <person name="Mottier S."/>
            <person name="Galibert F."/>
            <person name="Aves S.J."/>
            <person name="Xiang Z."/>
            <person name="Hunt C."/>
            <person name="Moore K."/>
            <person name="Hurst S.M."/>
            <person name="Lucas M."/>
            <person name="Rochet M."/>
            <person name="Gaillardin C."/>
            <person name="Tallada V.A."/>
            <person name="Garzon A."/>
            <person name="Thode G."/>
            <person name="Daga R.R."/>
            <person name="Cruzado L."/>
            <person name="Jimenez J."/>
            <person name="Sanchez M."/>
            <person name="del Rey F."/>
            <person name="Benito J."/>
            <person name="Dominguez A."/>
            <person name="Revuelta J.L."/>
            <person name="Moreno S."/>
            <person name="Armstrong J."/>
            <person name="Forsburg S.L."/>
            <person name="Cerutti L."/>
            <person name="Lowe T."/>
            <person name="McCombie W.R."/>
            <person name="Paulsen I."/>
            <person name="Potashkin J."/>
            <person name="Shpakovski G.V."/>
            <person name="Ussery D."/>
            <person name="Barrell B.G."/>
            <person name="Nurse P."/>
        </authorList>
    </citation>
    <scope>NUCLEOTIDE SEQUENCE [LARGE SCALE GENOMIC DNA]</scope>
    <source>
        <strain>972 / ATCC 24843</strain>
    </source>
</reference>
<reference evidence="8 9" key="2">
    <citation type="journal article" date="2000" name="Genes Cells">
        <title>Large-scale screening of intracellular protein localization in living fission yeast cells by the use of a GFP-fusion genomic DNA library.</title>
        <authorList>
            <person name="Ding D.-Q."/>
            <person name="Tomita Y."/>
            <person name="Yamamoto A."/>
            <person name="Chikashige Y."/>
            <person name="Haraguchi T."/>
            <person name="Hiraoka Y."/>
        </authorList>
    </citation>
    <scope>NUCLEOTIDE SEQUENCE [LARGE SCALE GENOMIC DNA] OF 564-761</scope>
    <scope>SUBCELLULAR LOCATION</scope>
    <source>
        <strain>ATCC 38364 / 968</strain>
    </source>
</reference>
<reference key="3">
    <citation type="journal article" date="2008" name="J. Proteome Res.">
        <title>Phosphoproteome analysis of fission yeast.</title>
        <authorList>
            <person name="Wilson-Grady J.T."/>
            <person name="Villen J."/>
            <person name="Gygi S.P."/>
        </authorList>
    </citation>
    <scope>PHOSPHORYLATION [LARGE SCALE ANALYSIS] AT SER-144</scope>
    <scope>IDENTIFICATION BY MASS SPECTROMETRY</scope>
</reference>
<feature type="chain" id="PRO_0000074334" description="TATA-binding protein-associated factor mot1">
    <location>
        <begin position="1"/>
        <end position="1953"/>
    </location>
</feature>
<feature type="repeat" description="HEAT 1" evidence="2">
    <location>
        <begin position="36"/>
        <end position="74"/>
    </location>
</feature>
<feature type="repeat" description="HEAT 2" evidence="2">
    <location>
        <begin position="358"/>
        <end position="396"/>
    </location>
</feature>
<feature type="repeat" description="HEAT 3" evidence="2">
    <location>
        <begin position="513"/>
        <end position="551"/>
    </location>
</feature>
<feature type="repeat" description="HEAT 4" evidence="2">
    <location>
        <begin position="554"/>
        <end position="592"/>
    </location>
</feature>
<feature type="repeat" description="HEAT 5" evidence="2">
    <location>
        <begin position="608"/>
        <end position="646"/>
    </location>
</feature>
<feature type="repeat" description="HEAT 6" evidence="2">
    <location>
        <begin position="1191"/>
        <end position="1229"/>
    </location>
</feature>
<feature type="repeat" description="HEAT 7" evidence="2">
    <location>
        <begin position="1270"/>
        <end position="1311"/>
    </location>
</feature>
<feature type="domain" description="Helicase ATP-binding" evidence="3">
    <location>
        <begin position="1370"/>
        <end position="1543"/>
    </location>
</feature>
<feature type="repeat" description="HEAT 8" evidence="2">
    <location>
        <begin position="1580"/>
        <end position="1623"/>
    </location>
</feature>
<feature type="domain" description="Helicase C-terminal" evidence="4">
    <location>
        <begin position="1725"/>
        <end position="1877"/>
    </location>
</feature>
<feature type="region of interest" description="Disordered" evidence="5">
    <location>
        <begin position="79"/>
        <end position="141"/>
    </location>
</feature>
<feature type="region of interest" description="Disordered" evidence="5">
    <location>
        <begin position="240"/>
        <end position="278"/>
    </location>
</feature>
<feature type="region of interest" description="Disordered" evidence="5">
    <location>
        <begin position="730"/>
        <end position="762"/>
    </location>
</feature>
<feature type="region of interest" description="Disordered" evidence="5">
    <location>
        <begin position="1078"/>
        <end position="1103"/>
    </location>
</feature>
<feature type="region of interest" description="Disordered" evidence="5">
    <location>
        <begin position="1901"/>
        <end position="1920"/>
    </location>
</feature>
<feature type="short sequence motif" description="DEGH box" evidence="2">
    <location>
        <begin position="1494"/>
        <end position="1497"/>
    </location>
</feature>
<feature type="compositionally biased region" description="Basic and acidic residues" evidence="5">
    <location>
        <begin position="98"/>
        <end position="108"/>
    </location>
</feature>
<feature type="compositionally biased region" description="Low complexity" evidence="5">
    <location>
        <begin position="113"/>
        <end position="130"/>
    </location>
</feature>
<feature type="compositionally biased region" description="Basic and acidic residues" evidence="5">
    <location>
        <begin position="131"/>
        <end position="141"/>
    </location>
</feature>
<feature type="compositionally biased region" description="Polar residues" evidence="5">
    <location>
        <begin position="242"/>
        <end position="276"/>
    </location>
</feature>
<feature type="binding site" evidence="3">
    <location>
        <begin position="1383"/>
        <end position="1390"/>
    </location>
    <ligand>
        <name>ATP</name>
        <dbReference type="ChEBI" id="CHEBI:30616"/>
    </ligand>
</feature>
<feature type="modified residue" description="Phosphoserine" evidence="7">
    <location>
        <position position="144"/>
    </location>
</feature>
<accession>O43065</accession>
<accession>O74784</accession>
<accession>O94734</accession>
<protein>
    <recommendedName>
        <fullName evidence="1">TATA-binding protein-associated factor mot1</fullName>
        <ecNumber evidence="1">3.6.4.-</ecNumber>
    </recommendedName>
    <alternativeName>
        <fullName>Modifier of transcription 1</fullName>
    </alternativeName>
    <alternativeName>
        <fullName>TBP-associated factor mot1</fullName>
    </alternativeName>
</protein>
<comment type="function">
    <text evidence="1">Regulates transcription in association with TATA binding protein (TBP). Removes TBP from the TATA box via its ATPase activity (By similarity).</text>
</comment>
<comment type="subunit">
    <text evidence="1">Forms a complex with TBP which binds TATA DNA.</text>
</comment>
<comment type="subcellular location">
    <subcellularLocation>
        <location evidence="6">Nucleus</location>
    </subcellularLocation>
    <text>Localized on chromatin.</text>
</comment>
<comment type="similarity">
    <text evidence="2">Belongs to the SNF2/RAD54 helicase family.</text>
</comment>
<name>BTAF1_SCHPO</name>
<dbReference type="EC" id="3.6.4.-" evidence="1"/>
<dbReference type="EMBL" id="AB027981">
    <property type="protein sequence ID" value="BAA87285.1"/>
    <property type="molecule type" value="Genomic_DNA"/>
</dbReference>
<dbReference type="EMBL" id="CU329671">
    <property type="protein sequence ID" value="CAA21270.2"/>
    <property type="molecule type" value="Genomic_DNA"/>
</dbReference>
<dbReference type="PIR" id="T39739">
    <property type="entry name" value="T40642"/>
</dbReference>
<dbReference type="RefSeq" id="NP_596080.2">
    <property type="nucleotide sequence ID" value="NM_001021992.3"/>
</dbReference>
<dbReference type="SMR" id="O43065"/>
<dbReference type="BioGRID" id="276189">
    <property type="interactions" value="3"/>
</dbReference>
<dbReference type="FunCoup" id="O43065">
    <property type="interactions" value="926"/>
</dbReference>
<dbReference type="STRING" id="284812.O43065"/>
<dbReference type="iPTMnet" id="O43065"/>
<dbReference type="PaxDb" id="4896-SPBC1826.01c.1"/>
<dbReference type="EnsemblFungi" id="SPBC1826.01c.1">
    <property type="protein sequence ID" value="SPBC1826.01c.1:pep"/>
    <property type="gene ID" value="SPBC1826.01c"/>
</dbReference>
<dbReference type="GeneID" id="2539633"/>
<dbReference type="KEGG" id="spo:2539633"/>
<dbReference type="PomBase" id="SPBC1826.01c">
    <property type="gene designation" value="mot1"/>
</dbReference>
<dbReference type="VEuPathDB" id="FungiDB:SPBC1826.01c"/>
<dbReference type="eggNOG" id="KOG0392">
    <property type="taxonomic scope" value="Eukaryota"/>
</dbReference>
<dbReference type="HOGENOM" id="CLU_000315_1_2_1"/>
<dbReference type="InParanoid" id="O43065"/>
<dbReference type="OMA" id="WYSDIAC"/>
<dbReference type="PhylomeDB" id="O43065"/>
<dbReference type="PRO" id="PR:O43065"/>
<dbReference type="Proteomes" id="UP000002485">
    <property type="component" value="Chromosome II"/>
</dbReference>
<dbReference type="GO" id="GO:0005634">
    <property type="term" value="C:nucleus"/>
    <property type="evidence" value="ECO:0000305"/>
    <property type="project" value="PomBase"/>
</dbReference>
<dbReference type="GO" id="GO:0005524">
    <property type="term" value="F:ATP binding"/>
    <property type="evidence" value="ECO:0007669"/>
    <property type="project" value="UniProtKB-KW"/>
</dbReference>
<dbReference type="GO" id="GO:0016887">
    <property type="term" value="F:ATP hydrolysis activity"/>
    <property type="evidence" value="ECO:0000266"/>
    <property type="project" value="PomBase"/>
</dbReference>
<dbReference type="GO" id="GO:0003677">
    <property type="term" value="F:DNA binding"/>
    <property type="evidence" value="ECO:0000266"/>
    <property type="project" value="PomBase"/>
</dbReference>
<dbReference type="GO" id="GO:0004386">
    <property type="term" value="F:helicase activity"/>
    <property type="evidence" value="ECO:0007669"/>
    <property type="project" value="UniProtKB-KW"/>
</dbReference>
<dbReference type="GO" id="GO:0016251">
    <property type="term" value="F:RNA polymerase II general transcription initiation factor activity"/>
    <property type="evidence" value="ECO:0000303"/>
    <property type="project" value="PomBase"/>
</dbReference>
<dbReference type="GO" id="GO:0017025">
    <property type="term" value="F:TBP-class protein binding"/>
    <property type="evidence" value="ECO:0007669"/>
    <property type="project" value="InterPro"/>
</dbReference>
<dbReference type="GO" id="GO:0006367">
    <property type="term" value="P:transcription initiation at RNA polymerase II promoter"/>
    <property type="evidence" value="ECO:0000266"/>
    <property type="project" value="PomBase"/>
</dbReference>
<dbReference type="CDD" id="cd17999">
    <property type="entry name" value="DEXHc_Mot1"/>
    <property type="match status" value="1"/>
</dbReference>
<dbReference type="CDD" id="cd18793">
    <property type="entry name" value="SF2_C_SNF"/>
    <property type="match status" value="1"/>
</dbReference>
<dbReference type="FunFam" id="3.40.50.10810:FF:000009">
    <property type="entry name" value="B-TFIID TATA-box-binding protein-associated factor 1"/>
    <property type="match status" value="1"/>
</dbReference>
<dbReference type="FunFam" id="1.25.10.10:FF:000508">
    <property type="entry name" value="Probable helicase mot1"/>
    <property type="match status" value="1"/>
</dbReference>
<dbReference type="FunFam" id="1.25.10.10:FF:000445">
    <property type="entry name" value="Related to MOT1-transcriptional accessory protein"/>
    <property type="match status" value="1"/>
</dbReference>
<dbReference type="FunFam" id="3.40.50.300:FF:000428">
    <property type="entry name" value="TATA-binding protein-associated factor 172"/>
    <property type="match status" value="1"/>
</dbReference>
<dbReference type="Gene3D" id="1.25.10.10">
    <property type="entry name" value="Leucine-rich Repeat Variant"/>
    <property type="match status" value="3"/>
</dbReference>
<dbReference type="Gene3D" id="3.40.50.300">
    <property type="entry name" value="P-loop containing nucleotide triphosphate hydrolases"/>
    <property type="match status" value="1"/>
</dbReference>
<dbReference type="Gene3D" id="3.40.50.10810">
    <property type="entry name" value="Tandem AAA-ATPase domain"/>
    <property type="match status" value="1"/>
</dbReference>
<dbReference type="InterPro" id="IPR011989">
    <property type="entry name" value="ARM-like"/>
</dbReference>
<dbReference type="InterPro" id="IPR016024">
    <property type="entry name" value="ARM-type_fold"/>
</dbReference>
<dbReference type="InterPro" id="IPR014001">
    <property type="entry name" value="Helicase_ATP-bd"/>
</dbReference>
<dbReference type="InterPro" id="IPR001650">
    <property type="entry name" value="Helicase_C-like"/>
</dbReference>
<dbReference type="InterPro" id="IPR044972">
    <property type="entry name" value="Mot1"/>
</dbReference>
<dbReference type="InterPro" id="IPR044078">
    <property type="entry name" value="Mot1_ATP-bd"/>
</dbReference>
<dbReference type="InterPro" id="IPR022707">
    <property type="entry name" value="Mot1_central_dom"/>
</dbReference>
<dbReference type="InterPro" id="IPR027417">
    <property type="entry name" value="P-loop_NTPase"/>
</dbReference>
<dbReference type="InterPro" id="IPR038718">
    <property type="entry name" value="SNF2-like_sf"/>
</dbReference>
<dbReference type="InterPro" id="IPR049730">
    <property type="entry name" value="SNF2/RAD54-like_C"/>
</dbReference>
<dbReference type="InterPro" id="IPR000330">
    <property type="entry name" value="SNF2_N"/>
</dbReference>
<dbReference type="PANTHER" id="PTHR36498">
    <property type="entry name" value="TATA-BINDING PROTEIN-ASSOCIATED FACTOR 172"/>
    <property type="match status" value="1"/>
</dbReference>
<dbReference type="PANTHER" id="PTHR36498:SF1">
    <property type="entry name" value="TATA-BINDING PROTEIN-ASSOCIATED FACTOR 172"/>
    <property type="match status" value="1"/>
</dbReference>
<dbReference type="Pfam" id="PF12054">
    <property type="entry name" value="DUF3535"/>
    <property type="match status" value="1"/>
</dbReference>
<dbReference type="Pfam" id="PF00271">
    <property type="entry name" value="Helicase_C"/>
    <property type="match status" value="1"/>
</dbReference>
<dbReference type="Pfam" id="PF00176">
    <property type="entry name" value="SNF2-rel_dom"/>
    <property type="match status" value="1"/>
</dbReference>
<dbReference type="SMART" id="SM00487">
    <property type="entry name" value="DEXDc"/>
    <property type="match status" value="1"/>
</dbReference>
<dbReference type="SMART" id="SM00490">
    <property type="entry name" value="HELICc"/>
    <property type="match status" value="1"/>
</dbReference>
<dbReference type="SUPFAM" id="SSF48371">
    <property type="entry name" value="ARM repeat"/>
    <property type="match status" value="2"/>
</dbReference>
<dbReference type="SUPFAM" id="SSF52540">
    <property type="entry name" value="P-loop containing nucleoside triphosphate hydrolases"/>
    <property type="match status" value="2"/>
</dbReference>
<dbReference type="PROSITE" id="PS51192">
    <property type="entry name" value="HELICASE_ATP_BIND_1"/>
    <property type="match status" value="1"/>
</dbReference>
<dbReference type="PROSITE" id="PS51194">
    <property type="entry name" value="HELICASE_CTER"/>
    <property type="match status" value="1"/>
</dbReference>
<proteinExistence type="evidence at protein level"/>
<sequence length="1953" mass="217632">MTTRLDRLVVLLDSGSTSVVRETAAKQIGDIQKVHPDELYNLLGRVVPYLKSKNWDTRVAAAKAIGGIVENVPVWNPNRTSPVKKEETEDLPSFNGDTEEKPFIKTEEGAPASSQSQVVVSSNLTSNSEVSKLEEERLSTRSHSQEIKPIVDFGPDEETAKELNTELKGKFENSLLSFESFDIANVLKAGKKLLGSASRDYDVNPANYSTHYLQQLSNLKSRLDLAGEYLDDSIMNDLGDNVGSNSKGSPTTSIPEHKTSINNNKPEDTPTPSENVHLSARQRNALKRKARQMKNSQKVRVIDVAPTLVHQQNSTSSADKKTGADYNFTAQSRSDRLVVEHKAPIVPSAAVAVTSDSVWPFETLVELLLIDMFDPSWEIRHGACMGLREIIRYAGFGYGRVVGKSEAENEQLNKKYFDDLLCRIACVFALDRFGDYLADQVVAPIRESVSQVLGVALIYVPNDSVFSMYKVLHSLVFQNELGLTNTVWEAAHGGMLGIKYLVAVKYPLFFSHSDYLDSLINTVIHGLANHDDDVRAVSALTLLPIADKLVQEKLSSCKNLLKVLWDCLDDVKDDLSSSTSCVMDLLSSLCSFTEVMNLMQETANSDPEFSFETLVPRLFHLMRYTLTGVRRSVVYALTKFISVQTSCSWITGLTLRLCFQNVLLEQQEDISKSSCELAQRVMDILYRDGPESFSKLLYSHIEPMLKVSITPIGSFRRPYPLDTTLIVKPSGQPYAPSTSRERNNNISELSNSRTKHRAKDDPKGSFCFSVDEPMLNGDVEFVGEERMLKARLRASSLLGRIIGRWKRDEILLFFKPFLQACLTSSFSTPVVLGSRLIESFFEVEDNDLTIQKDELYHLLCDQFATVPRENYANLVSQLHVVRAQCNALLNTFLDVGRLSRSKIPSLAVVVKGDPEAGPIAFGIADAEKLVGPTYENLCKLLSPSQKAQSSKALNEIKYLIIDEISIYKIAKERQDIQCSASIASAMVTYDKLPKKLNSIIKGIMESIKKEQFSCLQMHSASAMMKLISACYKESRQVISEKIVRNLCAYVCMDTTETPIFHDSGKNGILSLHSIGTSDDNDEQVSGKLVDDSDDVSNDRKSSLSSVSDKDAAVLQRMGAQLTLQQMAQNFGSSLFSRVPVLSQCLFVPLQQYAESGFPSEVDQASCTVGQDLLDAMSILRFLVAYLDSGLQSEIVSTLPHLLATLQSNYSAVRNMASKCFAAITESNAAGSKALHLLVEDVVPLLGDASSTIHRQGAIECIYHVVQRLGVRILPYILYLIIPLLGRMSDADQDVRVLATTSFATLVKLVPLEAGLPDPPDLPQYLLDSREKERKFLEQMLNPSKVEAFSIPVPISADLRKYQQEGVNWLAFLNKYELHGILCDDMGLGKTLQTICIVASDHYNRQKLFEESGSPKFAHVPSLIVCPSTLAGHWQQELSTYAPFLKVSAYVGPPAERAKIRSKMKKSDVVVTSYDICRNDVDELVKIDWNYCVLDEGHVIKNARAKLTKAVKSLRSYHRLILSGTPIQNNVLELWSLFDFLMPGFLGTEKTFQERFVRPIAASRDAKSSSKERERGTLALEAIHKQVLPFMLRRLKEDVLADLPPKIIQDYYCDMSDLQRKLLNDFVSQLNINEELEDDETEKTQGTRKKKSQKAHIFQALQYMRKLCNHPALILTEKHPKRNAIVKQLAKENSGLHDLKHAPKLTALGQLLRDCGLGNSSVNSNGIDSALTNAVSEHRVLIFCQLKDMLDMVEKDLLQATMPDVTYMRLDGSVEPTKRQEAVTKFNNDPSIDVLLLTTHVGGLGLNLTGADTVIFVEHDWNPMRDLQAMDRAHRIGQKKVVNVYRLITRGCLEEKIMGLQRFKMNVASTVVNQQNAGLSSIGTDQILDLFNTTADEQQTVQNIDKEESEDAAGRGLSGTSKKALEGLPEMWDESQYDEFNLDGFISTLPKDAS</sequence>